<organism>
    <name type="scientific">Sulfurisphaera tokodaii (strain DSM 16993 / JCM 10545 / NBRC 100140 / 7)</name>
    <name type="common">Sulfolobus tokodaii</name>
    <dbReference type="NCBI Taxonomy" id="273063"/>
    <lineage>
        <taxon>Archaea</taxon>
        <taxon>Thermoproteota</taxon>
        <taxon>Thermoprotei</taxon>
        <taxon>Sulfolobales</taxon>
        <taxon>Sulfolobaceae</taxon>
        <taxon>Sulfurisphaera</taxon>
    </lineage>
</organism>
<dbReference type="EC" id="3.5.4.13" evidence="1"/>
<dbReference type="EMBL" id="BA000023">
    <property type="protein sequence ID" value="BAK54202.1"/>
    <property type="molecule type" value="Genomic_DNA"/>
</dbReference>
<dbReference type="RefSeq" id="WP_052846226.1">
    <property type="nucleotide sequence ID" value="NC_003106.2"/>
</dbReference>
<dbReference type="SMR" id="Q976G3"/>
<dbReference type="STRING" id="273063.STK_02260"/>
<dbReference type="GeneID" id="95643773"/>
<dbReference type="KEGG" id="sto:STK_02260"/>
<dbReference type="PATRIC" id="fig|273063.9.peg.272"/>
<dbReference type="eggNOG" id="arCOG04048">
    <property type="taxonomic scope" value="Archaea"/>
</dbReference>
<dbReference type="OrthoDB" id="33242at2157"/>
<dbReference type="UniPathway" id="UPA00610">
    <property type="reaction ID" value="UER00665"/>
</dbReference>
<dbReference type="Proteomes" id="UP000001015">
    <property type="component" value="Chromosome"/>
</dbReference>
<dbReference type="GO" id="GO:0008829">
    <property type="term" value="F:dCTP deaminase activity"/>
    <property type="evidence" value="ECO:0007669"/>
    <property type="project" value="UniProtKB-UniRule"/>
</dbReference>
<dbReference type="GO" id="GO:0000166">
    <property type="term" value="F:nucleotide binding"/>
    <property type="evidence" value="ECO:0007669"/>
    <property type="project" value="UniProtKB-KW"/>
</dbReference>
<dbReference type="GO" id="GO:0006226">
    <property type="term" value="P:dUMP biosynthetic process"/>
    <property type="evidence" value="ECO:0007669"/>
    <property type="project" value="UniProtKB-UniPathway"/>
</dbReference>
<dbReference type="GO" id="GO:0006229">
    <property type="term" value="P:dUTP biosynthetic process"/>
    <property type="evidence" value="ECO:0007669"/>
    <property type="project" value="UniProtKB-UniRule"/>
</dbReference>
<dbReference type="CDD" id="cd07557">
    <property type="entry name" value="trimeric_dUTPase"/>
    <property type="match status" value="1"/>
</dbReference>
<dbReference type="Gene3D" id="2.70.40.10">
    <property type="match status" value="1"/>
</dbReference>
<dbReference type="HAMAP" id="MF_00146">
    <property type="entry name" value="dCTP_deaminase"/>
    <property type="match status" value="1"/>
</dbReference>
<dbReference type="InterPro" id="IPR011962">
    <property type="entry name" value="dCTP_deaminase"/>
</dbReference>
<dbReference type="InterPro" id="IPR036157">
    <property type="entry name" value="dUTPase-like_sf"/>
</dbReference>
<dbReference type="InterPro" id="IPR033704">
    <property type="entry name" value="dUTPase_trimeric"/>
</dbReference>
<dbReference type="NCBIfam" id="TIGR02274">
    <property type="entry name" value="dCTP_deam"/>
    <property type="match status" value="1"/>
</dbReference>
<dbReference type="PANTHER" id="PTHR42680">
    <property type="entry name" value="DCTP DEAMINASE"/>
    <property type="match status" value="1"/>
</dbReference>
<dbReference type="PANTHER" id="PTHR42680:SF3">
    <property type="entry name" value="DCTP DEAMINASE"/>
    <property type="match status" value="1"/>
</dbReference>
<dbReference type="Pfam" id="PF22769">
    <property type="entry name" value="DCD"/>
    <property type="match status" value="1"/>
</dbReference>
<dbReference type="SUPFAM" id="SSF51283">
    <property type="entry name" value="dUTPase-like"/>
    <property type="match status" value="1"/>
</dbReference>
<gene>
    <name evidence="1" type="primary">dcd</name>
    <name type="ordered locus">STK_02260</name>
</gene>
<feature type="chain" id="PRO_0000156041" description="dCTP deaminase">
    <location>
        <begin position="1"/>
        <end position="183"/>
    </location>
</feature>
<feature type="active site" description="Proton donor/acceptor" evidence="1">
    <location>
        <position position="123"/>
    </location>
</feature>
<feature type="binding site" evidence="1">
    <location>
        <begin position="97"/>
        <end position="102"/>
    </location>
    <ligand>
        <name>dCTP</name>
        <dbReference type="ChEBI" id="CHEBI:61481"/>
    </ligand>
</feature>
<feature type="binding site" evidence="1">
    <location>
        <position position="113"/>
    </location>
    <ligand>
        <name>dCTP</name>
        <dbReference type="ChEBI" id="CHEBI:61481"/>
    </ligand>
</feature>
<feature type="binding site" evidence="1">
    <location>
        <position position="155"/>
    </location>
    <ligand>
        <name>dCTP</name>
        <dbReference type="ChEBI" id="CHEBI:61481"/>
    </ligand>
</feature>
<feature type="binding site" evidence="1">
    <location>
        <position position="162"/>
    </location>
    <ligand>
        <name>dCTP</name>
        <dbReference type="ChEBI" id="CHEBI:61481"/>
    </ligand>
</feature>
<sequence>MILGDRDLKYYLEKGWIKIDPLREDTVRENGVDLRVGGEIARFIKTDKVFDPDNPDPAFFKIEKIEEFIIQPYEHVLLTTEEYIELPNDVMAFVNLRSSFARLGLFIPPTIVDAGFKGQITIEVVGSSFPVLLRRGTRFIHLIFARTLSPVEHPYQGKYQGQKGVTLPKFRTEASKFLSLHQK</sequence>
<name>DCD_SULTO</name>
<accession>Q976G3</accession>
<accession>F9VMQ6</accession>
<evidence type="ECO:0000255" key="1">
    <source>
        <dbReference type="HAMAP-Rule" id="MF_00146"/>
    </source>
</evidence>
<keyword id="KW-0378">Hydrolase</keyword>
<keyword id="KW-0546">Nucleotide metabolism</keyword>
<keyword id="KW-0547">Nucleotide-binding</keyword>
<keyword id="KW-1185">Reference proteome</keyword>
<comment type="function">
    <text evidence="1">Catalyzes the deamination of dCTP to dUTP.</text>
</comment>
<comment type="catalytic activity">
    <reaction evidence="1">
        <text>dCTP + H2O + H(+) = dUTP + NH4(+)</text>
        <dbReference type="Rhea" id="RHEA:22680"/>
        <dbReference type="ChEBI" id="CHEBI:15377"/>
        <dbReference type="ChEBI" id="CHEBI:15378"/>
        <dbReference type="ChEBI" id="CHEBI:28938"/>
        <dbReference type="ChEBI" id="CHEBI:61481"/>
        <dbReference type="ChEBI" id="CHEBI:61555"/>
        <dbReference type="EC" id="3.5.4.13"/>
    </reaction>
</comment>
<comment type="pathway">
    <text evidence="1">Pyrimidine metabolism; dUMP biosynthesis; dUMP from dCTP (dUTP route): step 1/2.</text>
</comment>
<comment type="subunit">
    <text evidence="1">Homotrimer.</text>
</comment>
<comment type="similarity">
    <text evidence="1">Belongs to the dCTP deaminase family.</text>
</comment>
<reference key="1">
    <citation type="journal article" date="2001" name="DNA Res.">
        <title>Complete genome sequence of an aerobic thermoacidophilic Crenarchaeon, Sulfolobus tokodaii strain7.</title>
        <authorList>
            <person name="Kawarabayasi Y."/>
            <person name="Hino Y."/>
            <person name="Horikawa H."/>
            <person name="Jin-no K."/>
            <person name="Takahashi M."/>
            <person name="Sekine M."/>
            <person name="Baba S."/>
            <person name="Ankai A."/>
            <person name="Kosugi H."/>
            <person name="Hosoyama A."/>
            <person name="Fukui S."/>
            <person name="Nagai Y."/>
            <person name="Nishijima K."/>
            <person name="Otsuka R."/>
            <person name="Nakazawa H."/>
            <person name="Takamiya M."/>
            <person name="Kato Y."/>
            <person name="Yoshizawa T."/>
            <person name="Tanaka T."/>
            <person name="Kudoh Y."/>
            <person name="Yamazaki J."/>
            <person name="Kushida N."/>
            <person name="Oguchi A."/>
            <person name="Aoki K."/>
            <person name="Masuda S."/>
            <person name="Yanagii M."/>
            <person name="Nishimura M."/>
            <person name="Yamagishi A."/>
            <person name="Oshima T."/>
            <person name="Kikuchi H."/>
        </authorList>
    </citation>
    <scope>NUCLEOTIDE SEQUENCE [LARGE SCALE GENOMIC DNA]</scope>
    <source>
        <strain>DSM 16993 / JCM 10545 / NBRC 100140 / 7</strain>
    </source>
</reference>
<proteinExistence type="inferred from homology"/>
<protein>
    <recommendedName>
        <fullName evidence="1">dCTP deaminase</fullName>
        <ecNumber evidence="1">3.5.4.13</ecNumber>
    </recommendedName>
    <alternativeName>
        <fullName evidence="1">Deoxycytidine triphosphate deaminase</fullName>
    </alternativeName>
</protein>